<organism>
    <name type="scientific">Crotalus adamanteus</name>
    <name type="common">Eastern diamondback rattlesnake</name>
    <dbReference type="NCBI Taxonomy" id="8729"/>
    <lineage>
        <taxon>Eukaryota</taxon>
        <taxon>Metazoa</taxon>
        <taxon>Chordata</taxon>
        <taxon>Craniata</taxon>
        <taxon>Vertebrata</taxon>
        <taxon>Euteleostomi</taxon>
        <taxon>Lepidosauria</taxon>
        <taxon>Squamata</taxon>
        <taxon>Bifurcata</taxon>
        <taxon>Unidentata</taxon>
        <taxon>Episquamata</taxon>
        <taxon>Toxicofera</taxon>
        <taxon>Serpentes</taxon>
        <taxon>Colubroidea</taxon>
        <taxon>Viperidae</taxon>
        <taxon>Crotalinae</taxon>
        <taxon>Crotalus</taxon>
    </lineage>
</organism>
<sequence length="258" mass="28050">MVLIRVLANLLILQLSYAQKSSELVIGGDECNINEHRSLVAIFNSTKFFCSGTLINQEWVVTAAHCDSTNFKMKLGVHSKKVPNENEQTRNPKEKFFCPNKKKDDVLDKDIMLIKLDSPVSNSEHIAPLSLPSSPPSVGSVCHIMGWGSITPIEKTLPDVPYCANINLLDDAVCRPPYPELPATSRTLCAGILEGGKDTCRGDSGGPLICNGQFQGIVFYGAHPCGQALKPGVYTKVFDYNDWIQSIIAGNTAATCPP</sequence>
<proteinExistence type="evidence at protein level"/>
<feature type="signal peptide" evidence="2">
    <location>
        <begin position="1"/>
        <end position="18"/>
    </location>
</feature>
<feature type="propeptide" id="PRO_0000425639" evidence="1">
    <location>
        <begin position="19"/>
        <end position="24"/>
    </location>
</feature>
<feature type="chain" id="PRO_0000425640" description="Snake venom serine proteinase 8">
    <location>
        <begin position="25"/>
        <end position="258"/>
    </location>
</feature>
<feature type="domain" description="Peptidase S1" evidence="3">
    <location>
        <begin position="25"/>
        <end position="249"/>
    </location>
</feature>
<feature type="active site" description="Charge relay system" evidence="1">
    <location>
        <position position="65"/>
    </location>
</feature>
<feature type="active site" description="Charge relay system" evidence="1">
    <location>
        <position position="110"/>
    </location>
</feature>
<feature type="active site" description="Charge relay system" evidence="1">
    <location>
        <position position="204"/>
    </location>
</feature>
<feature type="glycosylation site" description="N-linked (GlcNAc...) asparagine" evidence="2">
    <location>
        <position position="44"/>
    </location>
</feature>
<feature type="disulfide bond" evidence="3">
    <location>
        <begin position="31"/>
        <end position="163"/>
    </location>
</feature>
<feature type="disulfide bond" evidence="3">
    <location>
        <begin position="50"/>
        <end position="66"/>
    </location>
</feature>
<feature type="disulfide bond" evidence="3">
    <location>
        <begin position="98"/>
        <end position="256"/>
    </location>
</feature>
<feature type="disulfide bond" evidence="3">
    <location>
        <begin position="142"/>
        <end position="210"/>
    </location>
</feature>
<feature type="disulfide bond" evidence="3">
    <location>
        <begin position="174"/>
        <end position="189"/>
    </location>
</feature>
<feature type="disulfide bond" evidence="3">
    <location>
        <begin position="200"/>
        <end position="225"/>
    </location>
</feature>
<comment type="function">
    <text evidence="1">Snake venom serine protease that may act in the hemostasis system of the prey.</text>
</comment>
<comment type="subunit">
    <text evidence="1">Monomer.</text>
</comment>
<comment type="subcellular location">
    <subcellularLocation>
        <location>Secreted</location>
    </subcellularLocation>
</comment>
<comment type="tissue specificity">
    <text>Expressed by the venom gland.</text>
</comment>
<comment type="similarity">
    <text evidence="3">Belongs to the peptidase S1 family. Snake venom subfamily.</text>
</comment>
<evidence type="ECO:0000250" key="1"/>
<evidence type="ECO:0000255" key="2"/>
<evidence type="ECO:0000255" key="3">
    <source>
        <dbReference type="PROSITE-ProRule" id="PRU00274"/>
    </source>
</evidence>
<name>VSP8_CROAD</name>
<protein>
    <recommendedName>
        <fullName>Snake venom serine proteinase 8</fullName>
        <shortName>SVSP</shortName>
        <ecNumber>3.4.21.-</ecNumber>
    </recommendedName>
</protein>
<reference key="1">
    <citation type="journal article" date="2012" name="BMC Genomics">
        <title>The venom-gland transcriptome of the eastern diamondback rattlesnake (Crotalus adamanteus).</title>
        <authorList>
            <person name="Rokyta D.R."/>
            <person name="Lemmon A.R."/>
            <person name="Margres M.J."/>
            <person name="Aronow K."/>
        </authorList>
    </citation>
    <scope>NUCLEOTIDE SEQUENCE [MRNA]</scope>
    <source>
        <tissue>Venom gland</tissue>
    </source>
</reference>
<reference key="2">
    <citation type="journal article" date="2014" name="J. Proteomics">
        <title>Linking the transcriptome and proteome to characterize the venom of the eastern diamondback rattlesnake (Crotalus adamanteus).</title>
        <authorList>
            <person name="Margres M.J."/>
            <person name="McGivern J.J."/>
            <person name="Wray K.P."/>
            <person name="Seavy M."/>
            <person name="Calvin K."/>
            <person name="Rokyta D.R."/>
        </authorList>
    </citation>
    <scope>IDENTIFICATION BY MASS SPECTROMETRY</scope>
    <source>
        <tissue>Venom</tissue>
    </source>
</reference>
<accession>J3S835</accession>
<dbReference type="EC" id="3.4.21.-"/>
<dbReference type="EMBL" id="JU173737">
    <property type="protein sequence ID" value="AFJ49263.1"/>
    <property type="molecule type" value="mRNA"/>
</dbReference>
<dbReference type="SMR" id="J3S835"/>
<dbReference type="GO" id="GO:0005576">
    <property type="term" value="C:extracellular region"/>
    <property type="evidence" value="ECO:0007669"/>
    <property type="project" value="UniProtKB-SubCell"/>
</dbReference>
<dbReference type="GO" id="GO:0030141">
    <property type="term" value="C:secretory granule"/>
    <property type="evidence" value="ECO:0007669"/>
    <property type="project" value="TreeGrafter"/>
</dbReference>
<dbReference type="GO" id="GO:0004252">
    <property type="term" value="F:serine-type endopeptidase activity"/>
    <property type="evidence" value="ECO:0007669"/>
    <property type="project" value="InterPro"/>
</dbReference>
<dbReference type="GO" id="GO:0090729">
    <property type="term" value="F:toxin activity"/>
    <property type="evidence" value="ECO:0007669"/>
    <property type="project" value="UniProtKB-KW"/>
</dbReference>
<dbReference type="GO" id="GO:0006508">
    <property type="term" value="P:proteolysis"/>
    <property type="evidence" value="ECO:0007669"/>
    <property type="project" value="UniProtKB-KW"/>
</dbReference>
<dbReference type="CDD" id="cd00190">
    <property type="entry name" value="Tryp_SPc"/>
    <property type="match status" value="1"/>
</dbReference>
<dbReference type="FunFam" id="2.40.10.10:FF:000158">
    <property type="entry name" value="Thrombin-like enzyme saxthrombin"/>
    <property type="match status" value="1"/>
</dbReference>
<dbReference type="FunFam" id="2.40.10.10:FF:000153">
    <property type="entry name" value="Venom plasminogen activator TSV-PA"/>
    <property type="match status" value="1"/>
</dbReference>
<dbReference type="Gene3D" id="2.40.10.10">
    <property type="entry name" value="Trypsin-like serine proteases"/>
    <property type="match status" value="2"/>
</dbReference>
<dbReference type="InterPro" id="IPR009003">
    <property type="entry name" value="Peptidase_S1_PA"/>
</dbReference>
<dbReference type="InterPro" id="IPR043504">
    <property type="entry name" value="Peptidase_S1_PA_chymotrypsin"/>
</dbReference>
<dbReference type="InterPro" id="IPR001314">
    <property type="entry name" value="Peptidase_S1A"/>
</dbReference>
<dbReference type="InterPro" id="IPR001254">
    <property type="entry name" value="Trypsin_dom"/>
</dbReference>
<dbReference type="InterPro" id="IPR018114">
    <property type="entry name" value="TRYPSIN_HIS"/>
</dbReference>
<dbReference type="InterPro" id="IPR033116">
    <property type="entry name" value="TRYPSIN_SER"/>
</dbReference>
<dbReference type="PANTHER" id="PTHR24271:SF47">
    <property type="entry name" value="KALLIKREIN-1"/>
    <property type="match status" value="1"/>
</dbReference>
<dbReference type="PANTHER" id="PTHR24271">
    <property type="entry name" value="KALLIKREIN-RELATED"/>
    <property type="match status" value="1"/>
</dbReference>
<dbReference type="Pfam" id="PF00089">
    <property type="entry name" value="Trypsin"/>
    <property type="match status" value="1"/>
</dbReference>
<dbReference type="PRINTS" id="PR00722">
    <property type="entry name" value="CHYMOTRYPSIN"/>
</dbReference>
<dbReference type="SMART" id="SM00020">
    <property type="entry name" value="Tryp_SPc"/>
    <property type="match status" value="1"/>
</dbReference>
<dbReference type="SUPFAM" id="SSF50494">
    <property type="entry name" value="Trypsin-like serine proteases"/>
    <property type="match status" value="1"/>
</dbReference>
<dbReference type="PROSITE" id="PS50240">
    <property type="entry name" value="TRYPSIN_DOM"/>
    <property type="match status" value="1"/>
</dbReference>
<dbReference type="PROSITE" id="PS00134">
    <property type="entry name" value="TRYPSIN_HIS"/>
    <property type="match status" value="1"/>
</dbReference>
<dbReference type="PROSITE" id="PS00135">
    <property type="entry name" value="TRYPSIN_SER"/>
    <property type="match status" value="1"/>
</dbReference>
<keyword id="KW-1015">Disulfide bond</keyword>
<keyword id="KW-0325">Glycoprotein</keyword>
<keyword id="KW-1199">Hemostasis impairing toxin</keyword>
<keyword id="KW-0378">Hydrolase</keyword>
<keyword id="KW-0645">Protease</keyword>
<keyword id="KW-0964">Secreted</keyword>
<keyword id="KW-0720">Serine protease</keyword>
<keyword id="KW-0732">Signal</keyword>
<keyword id="KW-0800">Toxin</keyword>
<keyword id="KW-0865">Zymogen</keyword>